<organism>
    <name type="scientific">Mammillaria haageana</name>
    <name type="common">Cactus</name>
    <dbReference type="NCBI Taxonomy" id="130144"/>
    <lineage>
        <taxon>Eukaryota</taxon>
        <taxon>Viridiplantae</taxon>
        <taxon>Streptophyta</taxon>
        <taxon>Embryophyta</taxon>
        <taxon>Tracheophyta</taxon>
        <taxon>Spermatophyta</taxon>
        <taxon>Magnoliopsida</taxon>
        <taxon>eudicotyledons</taxon>
        <taxon>Gunneridae</taxon>
        <taxon>Pentapetalae</taxon>
        <taxon>Caryophyllales</taxon>
        <taxon>Cactineae</taxon>
        <taxon>Cactaceae</taxon>
        <taxon>Cactoideae</taxon>
        <taxon>Cacteae</taxon>
        <taxon>Mammillaria</taxon>
    </lineage>
</organism>
<gene>
    <name evidence="1" type="primary">matK</name>
</gene>
<geneLocation type="chloroplast"/>
<sequence length="510" mass="60671">MEEFKRYIELDRSWQHNFFYPLIFQEYIYGFAYDHGLNKSILLENAGDKKYSLLIVKRLINRMYQQTHLILSANHSNQNDFFGHKHKKNLYYQIISEGFAVIVEIPFSLLLISSPEAEENQIVKSHNLRSIHSIFPFFEDKFLHLNYVLEILIPYPIHLEILVQTLRYWVKDASSLHLLRFFLYEYRNWNSLITPQKSNSIFSKRNQRLFLFLYNFHVCEYESIFFFLCNQSSHLRSTSFGALLERNYFYGKLEYLVKVKTFTKDFCLILWLFKDPFLHYVRYRGKSILASKGTSLLMHKWKYYLLNFWQCHFSLWSQPRRIYINRLSKHSLDFMGFFSSVRLNSSVIRSQMVANSFLIDNRIKKFDTIVRIIPLVGSLAKAKFCNVLGHPISKSVWTDLLDSDIIDRFGRICRNLSHYYGGSSRKKSLYRIKYILLLSCARTLARKHKSTVRAFLKRLGSAFLEEFFTTEEEKVLSLILPRDSSISGGLYRGPFWYLDIICIHDLANDE</sequence>
<protein>
    <recommendedName>
        <fullName evidence="1">Maturase K</fullName>
    </recommendedName>
    <alternativeName>
        <fullName evidence="1">Intron maturase</fullName>
    </alternativeName>
</protein>
<proteinExistence type="inferred from homology"/>
<evidence type="ECO:0000255" key="1">
    <source>
        <dbReference type="HAMAP-Rule" id="MF_01390"/>
    </source>
</evidence>
<reference key="1">
    <citation type="journal article" date="2002" name="Am. J. Bot.">
        <title>Phylogenetic relationships in the cactus family (Cactaceae) based on evidence from trnK/matK and trnL-trnF sequences.</title>
        <authorList>
            <person name="Nyffeler R."/>
        </authorList>
        <dbReference type="AGRICOLA" id="IND23311510"/>
    </citation>
    <scope>NUCLEOTIDE SEQUENCE [GENOMIC DNA]</scope>
</reference>
<dbReference type="EMBL" id="AY015289">
    <property type="protein sequence ID" value="AAK19776.1"/>
    <property type="molecule type" value="Genomic_DNA"/>
</dbReference>
<dbReference type="GO" id="GO:0009507">
    <property type="term" value="C:chloroplast"/>
    <property type="evidence" value="ECO:0007669"/>
    <property type="project" value="UniProtKB-SubCell"/>
</dbReference>
<dbReference type="GO" id="GO:0003723">
    <property type="term" value="F:RNA binding"/>
    <property type="evidence" value="ECO:0007669"/>
    <property type="project" value="UniProtKB-KW"/>
</dbReference>
<dbReference type="GO" id="GO:0006397">
    <property type="term" value="P:mRNA processing"/>
    <property type="evidence" value="ECO:0007669"/>
    <property type="project" value="UniProtKB-KW"/>
</dbReference>
<dbReference type="GO" id="GO:0008380">
    <property type="term" value="P:RNA splicing"/>
    <property type="evidence" value="ECO:0007669"/>
    <property type="project" value="UniProtKB-UniRule"/>
</dbReference>
<dbReference type="GO" id="GO:0008033">
    <property type="term" value="P:tRNA processing"/>
    <property type="evidence" value="ECO:0007669"/>
    <property type="project" value="UniProtKB-KW"/>
</dbReference>
<dbReference type="HAMAP" id="MF_01390">
    <property type="entry name" value="MatK"/>
    <property type="match status" value="1"/>
</dbReference>
<dbReference type="InterPro" id="IPR024937">
    <property type="entry name" value="Domain_X"/>
</dbReference>
<dbReference type="InterPro" id="IPR002866">
    <property type="entry name" value="Maturase_MatK"/>
</dbReference>
<dbReference type="InterPro" id="IPR024942">
    <property type="entry name" value="Maturase_MatK_N"/>
</dbReference>
<dbReference type="PANTHER" id="PTHR34811">
    <property type="entry name" value="MATURASE K"/>
    <property type="match status" value="1"/>
</dbReference>
<dbReference type="PANTHER" id="PTHR34811:SF1">
    <property type="entry name" value="MATURASE K"/>
    <property type="match status" value="1"/>
</dbReference>
<dbReference type="Pfam" id="PF01348">
    <property type="entry name" value="Intron_maturas2"/>
    <property type="match status" value="1"/>
</dbReference>
<dbReference type="Pfam" id="PF01824">
    <property type="entry name" value="MatK_N"/>
    <property type="match status" value="1"/>
</dbReference>
<accession>Q95EC9</accession>
<feature type="chain" id="PRO_0000143504" description="Maturase K">
    <location>
        <begin position="1"/>
        <end position="510"/>
    </location>
</feature>
<comment type="function">
    <text evidence="1">Usually encoded in the trnK tRNA gene intron. Probably assists in splicing its own and other chloroplast group II introns.</text>
</comment>
<comment type="subcellular location">
    <subcellularLocation>
        <location>Plastid</location>
        <location>Chloroplast</location>
    </subcellularLocation>
</comment>
<comment type="similarity">
    <text evidence="1">Belongs to the intron maturase 2 family. MatK subfamily.</text>
</comment>
<keyword id="KW-0150">Chloroplast</keyword>
<keyword id="KW-0507">mRNA processing</keyword>
<keyword id="KW-0934">Plastid</keyword>
<keyword id="KW-0694">RNA-binding</keyword>
<keyword id="KW-0819">tRNA processing</keyword>
<name>MATK_MAMHA</name>